<accession>A4XIU2</accession>
<protein>
    <recommendedName>
        <fullName evidence="1">Formate--tetrahydrofolate ligase</fullName>
        <ecNumber evidence="1">6.3.4.3</ecNumber>
    </recommendedName>
    <alternativeName>
        <fullName evidence="1">Formyltetrahydrofolate synthetase</fullName>
        <shortName evidence="1">FHS</shortName>
        <shortName evidence="1">FTHFS</shortName>
    </alternativeName>
</protein>
<evidence type="ECO:0000255" key="1">
    <source>
        <dbReference type="HAMAP-Rule" id="MF_01543"/>
    </source>
</evidence>
<name>FTHS_CALS8</name>
<keyword id="KW-0067">ATP-binding</keyword>
<keyword id="KW-0436">Ligase</keyword>
<keyword id="KW-0547">Nucleotide-binding</keyword>
<keyword id="KW-0554">One-carbon metabolism</keyword>
<gene>
    <name evidence="1" type="primary">fhs</name>
    <name type="ordered locus">Csac_1224</name>
</gene>
<dbReference type="EC" id="6.3.4.3" evidence="1"/>
<dbReference type="EMBL" id="CP000679">
    <property type="protein sequence ID" value="ABP66827.1"/>
    <property type="molecule type" value="Genomic_DNA"/>
</dbReference>
<dbReference type="SMR" id="A4XIU2"/>
<dbReference type="STRING" id="351627.Csac_1224"/>
<dbReference type="KEGG" id="csc:Csac_1224"/>
<dbReference type="eggNOG" id="COG2759">
    <property type="taxonomic scope" value="Bacteria"/>
</dbReference>
<dbReference type="HOGENOM" id="CLU_003601_3_3_9"/>
<dbReference type="OrthoDB" id="9761733at2"/>
<dbReference type="UniPathway" id="UPA00193"/>
<dbReference type="Proteomes" id="UP000000256">
    <property type="component" value="Chromosome"/>
</dbReference>
<dbReference type="GO" id="GO:0005524">
    <property type="term" value="F:ATP binding"/>
    <property type="evidence" value="ECO:0007669"/>
    <property type="project" value="UniProtKB-UniRule"/>
</dbReference>
<dbReference type="GO" id="GO:0004329">
    <property type="term" value="F:formate-tetrahydrofolate ligase activity"/>
    <property type="evidence" value="ECO:0007669"/>
    <property type="project" value="UniProtKB-UniRule"/>
</dbReference>
<dbReference type="GO" id="GO:0035999">
    <property type="term" value="P:tetrahydrofolate interconversion"/>
    <property type="evidence" value="ECO:0007669"/>
    <property type="project" value="UniProtKB-UniRule"/>
</dbReference>
<dbReference type="CDD" id="cd00477">
    <property type="entry name" value="FTHFS"/>
    <property type="match status" value="1"/>
</dbReference>
<dbReference type="FunFam" id="3.30.1510.10:FF:000001">
    <property type="entry name" value="Formate--tetrahydrofolate ligase"/>
    <property type="match status" value="1"/>
</dbReference>
<dbReference type="FunFam" id="3.10.410.10:FF:000001">
    <property type="entry name" value="Putative formate--tetrahydrofolate ligase"/>
    <property type="match status" value="1"/>
</dbReference>
<dbReference type="Gene3D" id="3.30.1510.10">
    <property type="entry name" value="Domain 2, N(10)-formyltetrahydrofolate synthetase"/>
    <property type="match status" value="1"/>
</dbReference>
<dbReference type="Gene3D" id="3.10.410.10">
    <property type="entry name" value="Formyltetrahydrofolate synthetase, domain 3"/>
    <property type="match status" value="1"/>
</dbReference>
<dbReference type="Gene3D" id="3.40.50.300">
    <property type="entry name" value="P-loop containing nucleotide triphosphate hydrolases"/>
    <property type="match status" value="1"/>
</dbReference>
<dbReference type="HAMAP" id="MF_01543">
    <property type="entry name" value="FTHFS"/>
    <property type="match status" value="1"/>
</dbReference>
<dbReference type="InterPro" id="IPR000559">
    <property type="entry name" value="Formate_THF_ligase"/>
</dbReference>
<dbReference type="InterPro" id="IPR027417">
    <property type="entry name" value="P-loop_NTPase"/>
</dbReference>
<dbReference type="NCBIfam" id="NF010030">
    <property type="entry name" value="PRK13505.1"/>
    <property type="match status" value="1"/>
</dbReference>
<dbReference type="Pfam" id="PF01268">
    <property type="entry name" value="FTHFS"/>
    <property type="match status" value="1"/>
</dbReference>
<dbReference type="SUPFAM" id="SSF52540">
    <property type="entry name" value="P-loop containing nucleoside triphosphate hydrolases"/>
    <property type="match status" value="1"/>
</dbReference>
<sequence length="554" mass="60246">MKSTSKLQEMKLKNITEIAESVGLSEDDIELYGKYKAKISLDVLKQKPRQREGKVILVTSINPTPYGEGKTTTAIGLSMAINRLGFKSIVTLREPSLGPYLGIKGGATGGGVAQVLPSTDINLHFTGDIHAVTSANNLLCAAIDNHIYHGNELNINPKAVMVKRAMDMNDRALRNIVIGLGDGQRGAVREDGFIISVASEVMAILCLSNDLEDLKERLGNILVGFSYDKKPIYAKDLKVHGAMALLLKDAIKPNLVQTSEATAAIIHGGPFANIAHGTNSIIAIKIAQKLSDYVVVEAGFGADLGAEKFVNIVSRKSGIYPSAAVMVVTTKALKYHGSMGAKENLTSENIDTLKKGFKNLEKHIENLKLLGLEAIVTLNRFPHDTPAEISEIESFCKERGVEFAVSEAYELGSEGALDLAQKVIEVASRKRKINFVYEDSDPVEEKIRKVAKTIYGAADVQFSKSALLGLELIKKLNIDHFPICMAKTQYSLSDDPKLLGRPKDFVLNVNEIRINNGAQFIVVICGDIMTMPGLSKDYAALHLDIDEDGNVVWV</sequence>
<proteinExistence type="inferred from homology"/>
<feature type="chain" id="PRO_0000318565" description="Formate--tetrahydrofolate ligase">
    <location>
        <begin position="1"/>
        <end position="554"/>
    </location>
</feature>
<feature type="binding site" evidence="1">
    <location>
        <begin position="64"/>
        <end position="71"/>
    </location>
    <ligand>
        <name>ATP</name>
        <dbReference type="ChEBI" id="CHEBI:30616"/>
    </ligand>
</feature>
<reference key="1">
    <citation type="submission" date="2007-04" db="EMBL/GenBank/DDBJ databases">
        <title>Genome sequence of the thermophilic hydrogen-producing bacterium Caldicellulosiruptor saccharolyticus DSM 8903.</title>
        <authorList>
            <person name="Copeland A."/>
            <person name="Lucas S."/>
            <person name="Lapidus A."/>
            <person name="Barry K."/>
            <person name="Detter J.C."/>
            <person name="Glavina del Rio T."/>
            <person name="Hammon N."/>
            <person name="Israni S."/>
            <person name="Dalin E."/>
            <person name="Tice H."/>
            <person name="Pitluck S."/>
            <person name="Kiss H."/>
            <person name="Brettin T."/>
            <person name="Bruce D."/>
            <person name="Han C."/>
            <person name="Schmutz J."/>
            <person name="Larimer F."/>
            <person name="Land M."/>
            <person name="Hauser L."/>
            <person name="Kyrpides N."/>
            <person name="Lykidis A."/>
            <person name="van de Werken H.J.G."/>
            <person name="Verhaart M.R.A."/>
            <person name="VanFossen A.L."/>
            <person name="Lewis D.L."/>
            <person name="Nichols J.D."/>
            <person name="Goorissen H.P."/>
            <person name="van Niel E.W.J."/>
            <person name="Stams F.J.M."/>
            <person name="Willquist K.U."/>
            <person name="Ward D.E."/>
            <person name="van der Oost J."/>
            <person name="Kelly R.M."/>
            <person name="Kengen S.M.W."/>
            <person name="Richardson P."/>
        </authorList>
    </citation>
    <scope>NUCLEOTIDE SEQUENCE [LARGE SCALE GENOMIC DNA]</scope>
    <source>
        <strain>ATCC 43494 / DSM 8903 / Tp8T 6331</strain>
    </source>
</reference>
<organism>
    <name type="scientific">Caldicellulosiruptor saccharolyticus (strain ATCC 43494 / DSM 8903 / Tp8T 6331)</name>
    <dbReference type="NCBI Taxonomy" id="351627"/>
    <lineage>
        <taxon>Bacteria</taxon>
        <taxon>Bacillati</taxon>
        <taxon>Bacillota</taxon>
        <taxon>Bacillota incertae sedis</taxon>
        <taxon>Caldicellulosiruptorales</taxon>
        <taxon>Caldicellulosiruptoraceae</taxon>
        <taxon>Caldicellulosiruptor</taxon>
    </lineage>
</organism>
<comment type="catalytic activity">
    <reaction evidence="1">
        <text>(6S)-5,6,7,8-tetrahydrofolate + formate + ATP = (6R)-10-formyltetrahydrofolate + ADP + phosphate</text>
        <dbReference type="Rhea" id="RHEA:20221"/>
        <dbReference type="ChEBI" id="CHEBI:15740"/>
        <dbReference type="ChEBI" id="CHEBI:30616"/>
        <dbReference type="ChEBI" id="CHEBI:43474"/>
        <dbReference type="ChEBI" id="CHEBI:57453"/>
        <dbReference type="ChEBI" id="CHEBI:195366"/>
        <dbReference type="ChEBI" id="CHEBI:456216"/>
        <dbReference type="EC" id="6.3.4.3"/>
    </reaction>
</comment>
<comment type="pathway">
    <text evidence="1">One-carbon metabolism; tetrahydrofolate interconversion.</text>
</comment>
<comment type="similarity">
    <text evidence="1">Belongs to the formate--tetrahydrofolate ligase family.</text>
</comment>